<feature type="chain" id="PRO_0000083728" description="3-isopropylmalate dehydrogenase">
    <location>
        <begin position="1"/>
        <end position="360"/>
    </location>
</feature>
<feature type="binding site" evidence="1">
    <location>
        <begin position="76"/>
        <end position="89"/>
    </location>
    <ligand>
        <name>NAD(+)</name>
        <dbReference type="ChEBI" id="CHEBI:57540"/>
    </ligand>
</feature>
<feature type="binding site" evidence="1">
    <location>
        <position position="96"/>
    </location>
    <ligand>
        <name>substrate</name>
    </ligand>
</feature>
<feature type="binding site" evidence="1">
    <location>
        <position position="106"/>
    </location>
    <ligand>
        <name>substrate</name>
    </ligand>
</feature>
<feature type="binding site" evidence="1">
    <location>
        <position position="134"/>
    </location>
    <ligand>
        <name>substrate</name>
    </ligand>
</feature>
<feature type="binding site" evidence="1">
    <location>
        <position position="224"/>
    </location>
    <ligand>
        <name>Mg(2+)</name>
        <dbReference type="ChEBI" id="CHEBI:18420"/>
    </ligand>
</feature>
<feature type="binding site" evidence="1">
    <location>
        <position position="224"/>
    </location>
    <ligand>
        <name>substrate</name>
    </ligand>
</feature>
<feature type="binding site" evidence="1">
    <location>
        <position position="248"/>
    </location>
    <ligand>
        <name>Mg(2+)</name>
        <dbReference type="ChEBI" id="CHEBI:18420"/>
    </ligand>
</feature>
<feature type="binding site" evidence="1">
    <location>
        <position position="252"/>
    </location>
    <ligand>
        <name>Mg(2+)</name>
        <dbReference type="ChEBI" id="CHEBI:18420"/>
    </ligand>
</feature>
<feature type="binding site" evidence="1">
    <location>
        <begin position="282"/>
        <end position="294"/>
    </location>
    <ligand>
        <name>NAD(+)</name>
        <dbReference type="ChEBI" id="CHEBI:57540"/>
    </ligand>
</feature>
<feature type="site" description="Important for catalysis" evidence="1">
    <location>
        <position position="141"/>
    </location>
</feature>
<feature type="site" description="Important for catalysis" evidence="1">
    <location>
        <position position="192"/>
    </location>
</feature>
<comment type="function">
    <text evidence="1">Catalyzes the oxidation of 3-carboxy-2-hydroxy-4-methylpentanoate (3-isopropylmalate) to 3-carboxy-4-methyl-2-oxopentanoate. The product decarboxylates to 4-methyl-2 oxopentanoate.</text>
</comment>
<comment type="catalytic activity">
    <reaction evidence="1">
        <text>(2R,3S)-3-isopropylmalate + NAD(+) = 4-methyl-2-oxopentanoate + CO2 + NADH</text>
        <dbReference type="Rhea" id="RHEA:32271"/>
        <dbReference type="ChEBI" id="CHEBI:16526"/>
        <dbReference type="ChEBI" id="CHEBI:17865"/>
        <dbReference type="ChEBI" id="CHEBI:35121"/>
        <dbReference type="ChEBI" id="CHEBI:57540"/>
        <dbReference type="ChEBI" id="CHEBI:57945"/>
        <dbReference type="EC" id="1.1.1.85"/>
    </reaction>
</comment>
<comment type="cofactor">
    <cofactor evidence="1">
        <name>Mg(2+)</name>
        <dbReference type="ChEBI" id="CHEBI:18420"/>
    </cofactor>
    <cofactor evidence="1">
        <name>Mn(2+)</name>
        <dbReference type="ChEBI" id="CHEBI:29035"/>
    </cofactor>
    <text evidence="1">Binds 1 Mg(2+) or Mn(2+) ion per subunit.</text>
</comment>
<comment type="pathway">
    <text evidence="1">Amino-acid biosynthesis; L-leucine biosynthesis; L-leucine from 3-methyl-2-oxobutanoate: step 3/4.</text>
</comment>
<comment type="subunit">
    <text evidence="1">Homodimer.</text>
</comment>
<comment type="subcellular location">
    <subcellularLocation>
        <location evidence="1">Cytoplasm</location>
    </subcellularLocation>
</comment>
<comment type="similarity">
    <text evidence="1">Belongs to the isocitrate and isopropylmalate dehydrogenases family. LeuB type 1 subfamily.</text>
</comment>
<sequence length="360" mass="38837">MSKQILILPGDGIGPEIMAEAVKVLELANDKYSLGFELSHDVIGGAAIDKHGVPLADETLDRARAADAVLLGAVGGPKWDKIERDIRPERGLLKIRAQLGLFGNLRPAILYPQLADASSLKPEIVSGLDILIVRELTGGIYFGAPRGTRELENGERQSYDTLPYSESEIRRIARVGFDMARVRGKKLCSVDKANVLASSQLWREVVEQVAKDYPDVELSHMYVDNAAMQLVRAPKQFDVIVTDNMFGDILSDEASMLTGSIGMLPSASLDANNKGMYEPCHGSAPDIAGQGIANPLATILSVSMMLRYSFNLTEAADAIEQAVSRVLDQGLRTGDIWSAGCTKVGTQEMGDAVVAALRNL</sequence>
<name>LEU3_PSEF5</name>
<keyword id="KW-0028">Amino-acid biosynthesis</keyword>
<keyword id="KW-0100">Branched-chain amino acid biosynthesis</keyword>
<keyword id="KW-0963">Cytoplasm</keyword>
<keyword id="KW-0432">Leucine biosynthesis</keyword>
<keyword id="KW-0460">Magnesium</keyword>
<keyword id="KW-0464">Manganese</keyword>
<keyword id="KW-0479">Metal-binding</keyword>
<keyword id="KW-0520">NAD</keyword>
<keyword id="KW-0560">Oxidoreductase</keyword>
<accession>Q4KF05</accession>
<evidence type="ECO:0000255" key="1">
    <source>
        <dbReference type="HAMAP-Rule" id="MF_01033"/>
    </source>
</evidence>
<dbReference type="EC" id="1.1.1.85" evidence="1"/>
<dbReference type="EMBL" id="CP000076">
    <property type="protein sequence ID" value="AAY91345.1"/>
    <property type="molecule type" value="Genomic_DNA"/>
</dbReference>
<dbReference type="RefSeq" id="WP_011060378.1">
    <property type="nucleotide sequence ID" value="NC_004129.6"/>
</dbReference>
<dbReference type="SMR" id="Q4KF05"/>
<dbReference type="STRING" id="220664.PFL_2066"/>
<dbReference type="KEGG" id="pfl:PFL_2066"/>
<dbReference type="PATRIC" id="fig|220664.5.peg.2098"/>
<dbReference type="eggNOG" id="COG0473">
    <property type="taxonomic scope" value="Bacteria"/>
</dbReference>
<dbReference type="HOGENOM" id="CLU_031953_0_3_6"/>
<dbReference type="UniPathway" id="UPA00048">
    <property type="reaction ID" value="UER00072"/>
</dbReference>
<dbReference type="Proteomes" id="UP000008540">
    <property type="component" value="Chromosome"/>
</dbReference>
<dbReference type="GO" id="GO:0005829">
    <property type="term" value="C:cytosol"/>
    <property type="evidence" value="ECO:0007669"/>
    <property type="project" value="TreeGrafter"/>
</dbReference>
<dbReference type="GO" id="GO:0003862">
    <property type="term" value="F:3-isopropylmalate dehydrogenase activity"/>
    <property type="evidence" value="ECO:0007669"/>
    <property type="project" value="UniProtKB-UniRule"/>
</dbReference>
<dbReference type="GO" id="GO:0000287">
    <property type="term" value="F:magnesium ion binding"/>
    <property type="evidence" value="ECO:0007669"/>
    <property type="project" value="InterPro"/>
</dbReference>
<dbReference type="GO" id="GO:0051287">
    <property type="term" value="F:NAD binding"/>
    <property type="evidence" value="ECO:0007669"/>
    <property type="project" value="InterPro"/>
</dbReference>
<dbReference type="GO" id="GO:0009098">
    <property type="term" value="P:L-leucine biosynthetic process"/>
    <property type="evidence" value="ECO:0007669"/>
    <property type="project" value="UniProtKB-UniRule"/>
</dbReference>
<dbReference type="FunFam" id="3.40.718.10:FF:000004">
    <property type="entry name" value="3-isopropylmalate dehydrogenase"/>
    <property type="match status" value="1"/>
</dbReference>
<dbReference type="Gene3D" id="3.40.718.10">
    <property type="entry name" value="Isopropylmalate Dehydrogenase"/>
    <property type="match status" value="1"/>
</dbReference>
<dbReference type="HAMAP" id="MF_01033">
    <property type="entry name" value="LeuB_type1"/>
    <property type="match status" value="1"/>
</dbReference>
<dbReference type="InterPro" id="IPR019818">
    <property type="entry name" value="IsoCit/isopropylmalate_DH_CS"/>
</dbReference>
<dbReference type="InterPro" id="IPR024084">
    <property type="entry name" value="IsoPropMal-DH-like_dom"/>
</dbReference>
<dbReference type="InterPro" id="IPR004429">
    <property type="entry name" value="Isopropylmalate_DH"/>
</dbReference>
<dbReference type="NCBIfam" id="TIGR00169">
    <property type="entry name" value="leuB"/>
    <property type="match status" value="1"/>
</dbReference>
<dbReference type="PANTHER" id="PTHR42979">
    <property type="entry name" value="3-ISOPROPYLMALATE DEHYDROGENASE"/>
    <property type="match status" value="1"/>
</dbReference>
<dbReference type="PANTHER" id="PTHR42979:SF1">
    <property type="entry name" value="3-ISOPROPYLMALATE DEHYDROGENASE"/>
    <property type="match status" value="1"/>
</dbReference>
<dbReference type="Pfam" id="PF00180">
    <property type="entry name" value="Iso_dh"/>
    <property type="match status" value="1"/>
</dbReference>
<dbReference type="SMART" id="SM01329">
    <property type="entry name" value="Iso_dh"/>
    <property type="match status" value="1"/>
</dbReference>
<dbReference type="SUPFAM" id="SSF53659">
    <property type="entry name" value="Isocitrate/Isopropylmalate dehydrogenase-like"/>
    <property type="match status" value="1"/>
</dbReference>
<dbReference type="PROSITE" id="PS00470">
    <property type="entry name" value="IDH_IMDH"/>
    <property type="match status" value="1"/>
</dbReference>
<reference key="1">
    <citation type="journal article" date="2005" name="Nat. Biotechnol.">
        <title>Complete genome sequence of the plant commensal Pseudomonas fluorescens Pf-5.</title>
        <authorList>
            <person name="Paulsen I.T."/>
            <person name="Press C.M."/>
            <person name="Ravel J."/>
            <person name="Kobayashi D.Y."/>
            <person name="Myers G.S.A."/>
            <person name="Mavrodi D.V."/>
            <person name="DeBoy R.T."/>
            <person name="Seshadri R."/>
            <person name="Ren Q."/>
            <person name="Madupu R."/>
            <person name="Dodson R.J."/>
            <person name="Durkin A.S."/>
            <person name="Brinkac L.M."/>
            <person name="Daugherty S.C."/>
            <person name="Sullivan S.A."/>
            <person name="Rosovitz M.J."/>
            <person name="Gwinn M.L."/>
            <person name="Zhou L."/>
            <person name="Schneider D.J."/>
            <person name="Cartinhour S.W."/>
            <person name="Nelson W.C."/>
            <person name="Weidman J."/>
            <person name="Watkins K."/>
            <person name="Tran K."/>
            <person name="Khouri H."/>
            <person name="Pierson E.A."/>
            <person name="Pierson L.S. III"/>
            <person name="Thomashow L.S."/>
            <person name="Loper J.E."/>
        </authorList>
    </citation>
    <scope>NUCLEOTIDE SEQUENCE [LARGE SCALE GENOMIC DNA]</scope>
    <source>
        <strain>ATCC BAA-477 / NRRL B-23932 / Pf-5</strain>
    </source>
</reference>
<protein>
    <recommendedName>
        <fullName evidence="1">3-isopropylmalate dehydrogenase</fullName>
        <ecNumber evidence="1">1.1.1.85</ecNumber>
    </recommendedName>
    <alternativeName>
        <fullName evidence="1">3-IPM-DH</fullName>
    </alternativeName>
    <alternativeName>
        <fullName evidence="1">Beta-IPM dehydrogenase</fullName>
        <shortName evidence="1">IMDH</shortName>
    </alternativeName>
</protein>
<gene>
    <name evidence="1" type="primary">leuB</name>
    <name type="ordered locus">PFL_2066</name>
</gene>
<organism>
    <name type="scientific">Pseudomonas fluorescens (strain ATCC BAA-477 / NRRL B-23932 / Pf-5)</name>
    <dbReference type="NCBI Taxonomy" id="220664"/>
    <lineage>
        <taxon>Bacteria</taxon>
        <taxon>Pseudomonadati</taxon>
        <taxon>Pseudomonadota</taxon>
        <taxon>Gammaproteobacteria</taxon>
        <taxon>Pseudomonadales</taxon>
        <taxon>Pseudomonadaceae</taxon>
        <taxon>Pseudomonas</taxon>
    </lineage>
</organism>
<proteinExistence type="inferred from homology"/>